<dbReference type="EMBL" id="CP000254">
    <property type="protein sequence ID" value="ABD41949.1"/>
    <property type="molecule type" value="Genomic_DNA"/>
</dbReference>
<dbReference type="RefSeq" id="WP_011449207.1">
    <property type="nucleotide sequence ID" value="NC_007796.1"/>
</dbReference>
<dbReference type="SMR" id="Q2FT32"/>
<dbReference type="FunCoup" id="Q2FT32">
    <property type="interactions" value="144"/>
</dbReference>
<dbReference type="STRING" id="323259.Mhun_2244"/>
<dbReference type="EnsemblBacteria" id="ABD41949">
    <property type="protein sequence ID" value="ABD41949"/>
    <property type="gene ID" value="Mhun_2244"/>
</dbReference>
<dbReference type="GeneID" id="3923946"/>
<dbReference type="KEGG" id="mhu:Mhun_2244"/>
<dbReference type="eggNOG" id="arCOG04096">
    <property type="taxonomic scope" value="Archaea"/>
</dbReference>
<dbReference type="HOGENOM" id="CLU_073626_0_3_2"/>
<dbReference type="InParanoid" id="Q2FT32"/>
<dbReference type="OrthoDB" id="10698at2157"/>
<dbReference type="Proteomes" id="UP000001941">
    <property type="component" value="Chromosome"/>
</dbReference>
<dbReference type="GO" id="GO:0022627">
    <property type="term" value="C:cytosolic small ribosomal subunit"/>
    <property type="evidence" value="ECO:0007669"/>
    <property type="project" value="TreeGrafter"/>
</dbReference>
<dbReference type="GO" id="GO:0019843">
    <property type="term" value="F:rRNA binding"/>
    <property type="evidence" value="ECO:0007669"/>
    <property type="project" value="UniProtKB-UniRule"/>
</dbReference>
<dbReference type="GO" id="GO:0003735">
    <property type="term" value="F:structural constituent of ribosome"/>
    <property type="evidence" value="ECO:0007669"/>
    <property type="project" value="InterPro"/>
</dbReference>
<dbReference type="GO" id="GO:0006412">
    <property type="term" value="P:translation"/>
    <property type="evidence" value="ECO:0007669"/>
    <property type="project" value="UniProtKB-UniRule"/>
</dbReference>
<dbReference type="CDD" id="cd00364">
    <property type="entry name" value="Ribosomal_uS17"/>
    <property type="match status" value="1"/>
</dbReference>
<dbReference type="FunFam" id="2.40.50.1000:FF:000005">
    <property type="entry name" value="30S ribosomal protein S17"/>
    <property type="match status" value="1"/>
</dbReference>
<dbReference type="Gene3D" id="2.40.50.1000">
    <property type="match status" value="1"/>
</dbReference>
<dbReference type="HAMAP" id="MF_01345_A">
    <property type="entry name" value="Ribosomal_uS17_A"/>
    <property type="match status" value="1"/>
</dbReference>
<dbReference type="InterPro" id="IPR012340">
    <property type="entry name" value="NA-bd_OB-fold"/>
</dbReference>
<dbReference type="InterPro" id="IPR000266">
    <property type="entry name" value="Ribosomal_uS17"/>
</dbReference>
<dbReference type="InterPro" id="IPR028333">
    <property type="entry name" value="Ribosomal_uS17_arc/euk"/>
</dbReference>
<dbReference type="InterPro" id="IPR019978">
    <property type="entry name" value="Ribosomal_uS17_archaeal"/>
</dbReference>
<dbReference type="InterPro" id="IPR019979">
    <property type="entry name" value="Ribosomal_uS17_CS"/>
</dbReference>
<dbReference type="NCBIfam" id="NF006345">
    <property type="entry name" value="PRK08572.1"/>
    <property type="match status" value="1"/>
</dbReference>
<dbReference type="NCBIfam" id="TIGR03630">
    <property type="entry name" value="uS17_arch"/>
    <property type="match status" value="1"/>
</dbReference>
<dbReference type="PANTHER" id="PTHR10744">
    <property type="entry name" value="40S RIBOSOMAL PROTEIN S11 FAMILY MEMBER"/>
    <property type="match status" value="1"/>
</dbReference>
<dbReference type="PANTHER" id="PTHR10744:SF9">
    <property type="entry name" value="40S RIBOSOMAL PROTEIN S11-RELATED"/>
    <property type="match status" value="1"/>
</dbReference>
<dbReference type="Pfam" id="PF00366">
    <property type="entry name" value="Ribosomal_S17"/>
    <property type="match status" value="1"/>
</dbReference>
<dbReference type="PRINTS" id="PR00973">
    <property type="entry name" value="RIBOSOMALS17"/>
</dbReference>
<dbReference type="SUPFAM" id="SSF50249">
    <property type="entry name" value="Nucleic acid-binding proteins"/>
    <property type="match status" value="1"/>
</dbReference>
<dbReference type="PROSITE" id="PS00056">
    <property type="entry name" value="RIBOSOMAL_S17"/>
    <property type="match status" value="1"/>
</dbReference>
<proteinExistence type="inferred from homology"/>
<feature type="chain" id="PRO_0000233624" description="Small ribosomal subunit protein uS17">
    <location>
        <begin position="1"/>
        <end position="108"/>
    </location>
</feature>
<comment type="function">
    <text evidence="1">One of the primary rRNA binding proteins, it binds specifically to the 5'-end of 16S ribosomal RNA.</text>
</comment>
<comment type="subunit">
    <text evidence="1">Part of the 30S ribosomal subunit.</text>
</comment>
<comment type="similarity">
    <text evidence="1">Belongs to the universal ribosomal protein uS17 family.</text>
</comment>
<gene>
    <name evidence="1" type="primary">rps17</name>
    <name type="ordered locus">Mhun_2244</name>
</gene>
<organism>
    <name type="scientific">Methanospirillum hungatei JF-1 (strain ATCC 27890 / DSM 864 / NBRC 100397 / JF-1)</name>
    <dbReference type="NCBI Taxonomy" id="323259"/>
    <lineage>
        <taxon>Archaea</taxon>
        <taxon>Methanobacteriati</taxon>
        <taxon>Methanobacteriota</taxon>
        <taxon>Stenosarchaea group</taxon>
        <taxon>Methanomicrobia</taxon>
        <taxon>Methanomicrobiales</taxon>
        <taxon>Methanospirillaceae</taxon>
        <taxon>Methanospirillum</taxon>
    </lineage>
</organism>
<sequence>MARDIGLNVPVPEKDCSDVNCPFHGTLPVRGQVITGKVVSDKMTGSVVVQRDYLHFVRKYQRYEKRSSKIHAHNPPCLHARVGDMVSIAECRPLSKTKTYVVVEVNRA</sequence>
<accession>Q2FT32</accession>
<reference key="1">
    <citation type="journal article" date="2016" name="Stand. Genomic Sci.">
        <title>Complete genome sequence of Methanospirillum hungatei type strain JF1.</title>
        <authorList>
            <person name="Gunsalus R.P."/>
            <person name="Cook L.E."/>
            <person name="Crable B."/>
            <person name="Rohlin L."/>
            <person name="McDonald E."/>
            <person name="Mouttaki H."/>
            <person name="Sieber J.R."/>
            <person name="Poweleit N."/>
            <person name="Zhou H."/>
            <person name="Lapidus A.L."/>
            <person name="Daligault H.E."/>
            <person name="Land M."/>
            <person name="Gilna P."/>
            <person name="Ivanova N."/>
            <person name="Kyrpides N."/>
            <person name="Culley D.E."/>
            <person name="McInerney M.J."/>
        </authorList>
    </citation>
    <scope>NUCLEOTIDE SEQUENCE [LARGE SCALE GENOMIC DNA]</scope>
    <source>
        <strain>ATCC 27890 / DSM 864 / NBRC 100397 / JF-1</strain>
    </source>
</reference>
<protein>
    <recommendedName>
        <fullName evidence="1">Small ribosomal subunit protein uS17</fullName>
    </recommendedName>
    <alternativeName>
        <fullName evidence="2">30S ribosomal protein S17</fullName>
    </alternativeName>
</protein>
<evidence type="ECO:0000255" key="1">
    <source>
        <dbReference type="HAMAP-Rule" id="MF_01345"/>
    </source>
</evidence>
<evidence type="ECO:0000305" key="2"/>
<keyword id="KW-1185">Reference proteome</keyword>
<keyword id="KW-0687">Ribonucleoprotein</keyword>
<keyword id="KW-0689">Ribosomal protein</keyword>
<keyword id="KW-0694">RNA-binding</keyword>
<keyword id="KW-0699">rRNA-binding</keyword>
<name>RS17_METHJ</name>